<feature type="chain" id="PRO_0000432621" description="Cyclin-dependent kinase 7">
    <location>
        <begin position="1"/>
        <end position="330"/>
    </location>
</feature>
<feature type="domain" description="Protein kinase" evidence="2">
    <location>
        <begin position="5"/>
        <end position="289"/>
    </location>
</feature>
<feature type="region of interest" description="Disordered" evidence="3">
    <location>
        <begin position="305"/>
        <end position="330"/>
    </location>
</feature>
<feature type="compositionally biased region" description="Basic and acidic residues" evidence="3">
    <location>
        <begin position="315"/>
        <end position="330"/>
    </location>
</feature>
<feature type="active site" description="Proton acceptor" evidence="2">
    <location>
        <position position="130"/>
    </location>
</feature>
<feature type="binding site" evidence="2">
    <location>
        <begin position="11"/>
        <end position="19"/>
    </location>
    <ligand>
        <name>ATP</name>
        <dbReference type="ChEBI" id="CHEBI:30616"/>
    </ligand>
</feature>
<feature type="binding site" evidence="2">
    <location>
        <position position="34"/>
    </location>
    <ligand>
        <name>ATP</name>
        <dbReference type="ChEBI" id="CHEBI:30616"/>
    </ligand>
</feature>
<feature type="modified residue" description="Phosphothreonine" evidence="1">
    <location>
        <position position="163"/>
    </location>
</feature>
<feature type="mutagenesis site" description="In ax224; temperature-sensitive embryonic arrest at approximately 50-cell stage characterized by a severe defect in the transcription of several mRNAs and a severe decrease in ama-1 phosphorylation. Increase in cell cycle length at the interphase and M phase stages." evidence="4">
    <original>C</original>
    <variation>T</variation>
    <location>
        <position position="280"/>
    </location>
</feature>
<gene>
    <name evidence="8" type="primary">cdk-7</name>
    <name evidence="8" type="ORF">Y39G10AL.3</name>
</gene>
<proteinExistence type="evidence at protein level"/>
<organism evidence="7">
    <name type="scientific">Caenorhabditis elegans</name>
    <dbReference type="NCBI Taxonomy" id="6239"/>
    <lineage>
        <taxon>Eukaryota</taxon>
        <taxon>Metazoa</taxon>
        <taxon>Ecdysozoa</taxon>
        <taxon>Nematoda</taxon>
        <taxon>Chromadorea</taxon>
        <taxon>Rhabditida</taxon>
        <taxon>Rhabditina</taxon>
        <taxon>Rhabditomorpha</taxon>
        <taxon>Rhabditoidea</taxon>
        <taxon>Rhabditidae</taxon>
        <taxon>Peloderinae</taxon>
        <taxon>Caenorhabditis</taxon>
    </lineage>
</organism>
<accession>G5EFV5</accession>
<name>CDK7_CAEEL</name>
<keyword id="KW-0067">ATP-binding</keyword>
<keyword id="KW-0131">Cell cycle</keyword>
<keyword id="KW-0132">Cell division</keyword>
<keyword id="KW-0418">Kinase</keyword>
<keyword id="KW-0547">Nucleotide-binding</keyword>
<keyword id="KW-0597">Phosphoprotein</keyword>
<keyword id="KW-1185">Reference proteome</keyword>
<keyword id="KW-0723">Serine/threonine-protein kinase</keyword>
<keyword id="KW-0804">Transcription</keyword>
<keyword id="KW-0805">Transcription regulation</keyword>
<keyword id="KW-0808">Transferase</keyword>
<sequence>MSRRYDTIKHLGEGQFANVYLAQDLESGECVAIKKIKLGSREEAKDGINRTAIREIKLLKEIHHDNIIGLRDVIGHRTSIQLVFDFMDTDLEHVIKDKEIILMPAHIKNITMQMLLGLEFLHVHWILHRDLKPNNLLMNKMGRVKLTDFGLARFFGSPNRNYTHQVVTRWYRAPELLFGARSYGVGIDIWSVGCIIAELLLRNPIFPGESDIDQLVKIFNILGCPTPETWPNMTEMNSYVIIKPQTEYMALNYYFSAAPQDLLDLMAGMWTFDPIKRLTCTQSLQMEYFRTQPFCCLDEELPLPKKQQPQKRSRRLDDDGTRPVRRLNFD</sequence>
<comment type="function">
    <text evidence="4">Serine/threonine kinase involved in cell cycle control and in RNA polymerase II-mediated RNA transcription. Required for maintaining chromosome ploidy. May phosphorylate the large subunit of RNA polymerase II, ama-1.</text>
</comment>
<comment type="catalytic activity">
    <reaction evidence="1">
        <text>L-seryl-[protein] + ATP = O-phospho-L-seryl-[protein] + ADP + H(+)</text>
        <dbReference type="Rhea" id="RHEA:17989"/>
        <dbReference type="Rhea" id="RHEA-COMP:9863"/>
        <dbReference type="Rhea" id="RHEA-COMP:11604"/>
        <dbReference type="ChEBI" id="CHEBI:15378"/>
        <dbReference type="ChEBI" id="CHEBI:29999"/>
        <dbReference type="ChEBI" id="CHEBI:30616"/>
        <dbReference type="ChEBI" id="CHEBI:83421"/>
        <dbReference type="ChEBI" id="CHEBI:456216"/>
        <dbReference type="EC" id="2.7.11.22"/>
    </reaction>
</comment>
<comment type="catalytic activity">
    <reaction evidence="1">
        <text>L-threonyl-[protein] + ATP = O-phospho-L-threonyl-[protein] + ADP + H(+)</text>
        <dbReference type="Rhea" id="RHEA:46608"/>
        <dbReference type="Rhea" id="RHEA-COMP:11060"/>
        <dbReference type="Rhea" id="RHEA-COMP:11605"/>
        <dbReference type="ChEBI" id="CHEBI:15378"/>
        <dbReference type="ChEBI" id="CHEBI:30013"/>
        <dbReference type="ChEBI" id="CHEBI:30616"/>
        <dbReference type="ChEBI" id="CHEBI:61977"/>
        <dbReference type="ChEBI" id="CHEBI:456216"/>
        <dbReference type="EC" id="2.7.11.22"/>
    </reaction>
</comment>
<comment type="catalytic activity">
    <reaction evidence="4">
        <text>[DNA-directed RNA polymerase] + ATP = phospho-[DNA-directed RNA polymerase] + ADP + H(+)</text>
        <dbReference type="Rhea" id="RHEA:10216"/>
        <dbReference type="Rhea" id="RHEA-COMP:11321"/>
        <dbReference type="Rhea" id="RHEA-COMP:11322"/>
        <dbReference type="ChEBI" id="CHEBI:15378"/>
        <dbReference type="ChEBI" id="CHEBI:30616"/>
        <dbReference type="ChEBI" id="CHEBI:43176"/>
        <dbReference type="ChEBI" id="CHEBI:68546"/>
        <dbReference type="ChEBI" id="CHEBI:456216"/>
        <dbReference type="EC" id="2.7.11.23"/>
    </reaction>
</comment>
<comment type="subunit">
    <text evidence="1">Catalytic component which, in association with cyclin H (cyh-1) and mat1, is likely to form the CAK complex.</text>
</comment>
<comment type="disruption phenotype">
    <text evidence="4">RNAi-mediated knockdown results in an arrest at approximately 50-cell embryonic stage. The phenotype is more severe when done in a cdk7(ax224) mutant background where the embryonic arrest occurs at the 1-cell stage due to an arrest in early meiosis.</text>
</comment>
<comment type="similarity">
    <text evidence="5">Belongs to the protein kinase superfamily. CMGC Ser/Thr protein kinase family. CDC2/CDKX subfamily.</text>
</comment>
<reference evidence="6" key="1">
    <citation type="submission" date="1999-05" db="EMBL/GenBank/DDBJ databases">
        <authorList>
            <person name="Liu J."/>
            <person name="Kipreos E.T."/>
        </authorList>
    </citation>
    <scope>NUCLEOTIDE SEQUENCE [MRNA]</scope>
    <source>
        <strain evidence="6">Bristol N2</strain>
    </source>
</reference>
<reference evidence="7" key="2">
    <citation type="journal article" date="1998" name="Science">
        <title>Genome sequence of the nematode C. elegans: a platform for investigating biology.</title>
        <authorList>
            <consortium name="The C. elegans sequencing consortium"/>
        </authorList>
    </citation>
    <scope>NUCLEOTIDE SEQUENCE [LARGE SCALE GENOMIC DNA]</scope>
    <source>
        <strain evidence="7">Bristol N2</strain>
    </source>
</reference>
<reference evidence="5" key="3">
    <citation type="journal article" date="2002" name="Proc. Natl. Acad. Sci. U.S.A.">
        <title>cdk-7 is required for mRNA transcription and cell cycle progression in Caenorhabditis elegans embryos.</title>
        <authorList>
            <person name="Wallenfang M.R."/>
            <person name="Seydoux G."/>
        </authorList>
    </citation>
    <scope>FUNCTION</scope>
    <scope>CATALYTIC ACTIVITY</scope>
    <scope>DISRUPTION PHENOTYPE</scope>
    <scope>MUTAGENESIS OF CYS-280</scope>
</reference>
<dbReference type="EC" id="2.7.11.22" evidence="1"/>
<dbReference type="EC" id="2.7.11.23" evidence="4"/>
<dbReference type="EMBL" id="AF154004">
    <property type="protein sequence ID" value="AAD38186.1"/>
    <property type="molecule type" value="mRNA"/>
</dbReference>
<dbReference type="EMBL" id="FO081124">
    <property type="protein sequence ID" value="CCD69307.1"/>
    <property type="molecule type" value="Genomic_DNA"/>
</dbReference>
<dbReference type="RefSeq" id="NP_001370652.1">
    <property type="nucleotide sequence ID" value="NM_001383811.2"/>
</dbReference>
<dbReference type="RefSeq" id="NP_490952.2">
    <property type="nucleotide sequence ID" value="NM_058551.6"/>
</dbReference>
<dbReference type="SMR" id="G5EFV5"/>
<dbReference type="FunCoup" id="G5EFV5">
    <property type="interactions" value="2831"/>
</dbReference>
<dbReference type="STRING" id="6239.Y39G10AL.3.2"/>
<dbReference type="PaxDb" id="6239-Y39G10AL.3.1"/>
<dbReference type="PeptideAtlas" id="G5EFV5"/>
<dbReference type="EnsemblMetazoa" id="Y39G10AL.3.1">
    <property type="protein sequence ID" value="Y39G10AL.3.1"/>
    <property type="gene ID" value="WBGene00000408"/>
</dbReference>
<dbReference type="EnsemblMetazoa" id="Y39G10AL.3.2">
    <property type="protein sequence ID" value="Y39G10AL.3.2"/>
    <property type="gene ID" value="WBGene00000408"/>
</dbReference>
<dbReference type="EnsemblMetazoa" id="Y39G10AL.3.3">
    <property type="protein sequence ID" value="Y39G10AL.3.3"/>
    <property type="gene ID" value="WBGene00000408"/>
</dbReference>
<dbReference type="GeneID" id="171784"/>
<dbReference type="AGR" id="WB:WBGene00000408"/>
<dbReference type="WormBase" id="Y39G10AL.3">
    <property type="protein sequence ID" value="CE30320"/>
    <property type="gene ID" value="WBGene00000408"/>
    <property type="gene designation" value="cdk-7"/>
</dbReference>
<dbReference type="eggNOG" id="KOG0659">
    <property type="taxonomic scope" value="Eukaryota"/>
</dbReference>
<dbReference type="GeneTree" id="ENSGT00940000155179"/>
<dbReference type="HOGENOM" id="CLU_000288_181_1_1"/>
<dbReference type="InParanoid" id="G5EFV5"/>
<dbReference type="OMA" id="GIHHCHR"/>
<dbReference type="OrthoDB" id="1732493at2759"/>
<dbReference type="PhylomeDB" id="G5EFV5"/>
<dbReference type="Reactome" id="R-CEL-112382">
    <property type="pathway name" value="Formation of RNA Pol II elongation complex"/>
</dbReference>
<dbReference type="Reactome" id="R-CEL-113418">
    <property type="pathway name" value="Formation of the Early Elongation Complex"/>
</dbReference>
<dbReference type="Reactome" id="R-CEL-5696395">
    <property type="pathway name" value="Formation of Incision Complex in GG-NER"/>
</dbReference>
<dbReference type="Reactome" id="R-CEL-674695">
    <property type="pathway name" value="RNA Polymerase II Pre-transcription Events"/>
</dbReference>
<dbReference type="Reactome" id="R-CEL-6781823">
    <property type="pathway name" value="Formation of TC-NER Pre-Incision Complex"/>
</dbReference>
<dbReference type="Reactome" id="R-CEL-6782135">
    <property type="pathway name" value="Dual incision in TC-NER"/>
</dbReference>
<dbReference type="Reactome" id="R-CEL-6782210">
    <property type="pathway name" value="Gap-filling DNA repair synthesis and ligation in TC-NER"/>
</dbReference>
<dbReference type="Reactome" id="R-CEL-6796648">
    <property type="pathway name" value="TP53 Regulates Transcription of DNA Repair Genes"/>
</dbReference>
<dbReference type="Reactome" id="R-CEL-6807505">
    <property type="pathway name" value="RNA polymerase II transcribes snRNA genes"/>
</dbReference>
<dbReference type="Reactome" id="R-CEL-72086">
    <property type="pathway name" value="mRNA Capping"/>
</dbReference>
<dbReference type="Reactome" id="R-CEL-73772">
    <property type="pathway name" value="RNA Polymerase I Promoter Escape"/>
</dbReference>
<dbReference type="Reactome" id="R-CEL-73776">
    <property type="pathway name" value="RNA Polymerase II Promoter Escape"/>
</dbReference>
<dbReference type="Reactome" id="R-CEL-73779">
    <property type="pathway name" value="RNA Polymerase II Transcription Pre-Initiation And Promoter Opening"/>
</dbReference>
<dbReference type="Reactome" id="R-CEL-75953">
    <property type="pathway name" value="RNA Polymerase II Transcription Initiation"/>
</dbReference>
<dbReference type="Reactome" id="R-CEL-75955">
    <property type="pathway name" value="RNA Polymerase II Transcription Elongation"/>
</dbReference>
<dbReference type="Reactome" id="R-CEL-76042">
    <property type="pathway name" value="RNA Polymerase II Transcription Initiation And Promoter Clearance"/>
</dbReference>
<dbReference type="Reactome" id="R-CEL-77075">
    <property type="pathway name" value="RNA Pol II CTD phosphorylation and interaction with CE"/>
</dbReference>
<dbReference type="PRO" id="PR:G5EFV5"/>
<dbReference type="Proteomes" id="UP000001940">
    <property type="component" value="Chromosome I"/>
</dbReference>
<dbReference type="Bgee" id="WBGene00000408">
    <property type="expression patterns" value="Expressed in germ line (C elegans) and 4 other cell types or tissues"/>
</dbReference>
<dbReference type="GO" id="GO:0005737">
    <property type="term" value="C:cytoplasm"/>
    <property type="evidence" value="ECO:0000318"/>
    <property type="project" value="GO_Central"/>
</dbReference>
<dbReference type="GO" id="GO:0005634">
    <property type="term" value="C:nucleus"/>
    <property type="evidence" value="ECO:0000318"/>
    <property type="project" value="GO_Central"/>
</dbReference>
<dbReference type="GO" id="GO:0005675">
    <property type="term" value="C:transcription factor TFIIH holo complex"/>
    <property type="evidence" value="ECO:0000250"/>
    <property type="project" value="WormBase"/>
</dbReference>
<dbReference type="GO" id="GO:0070985">
    <property type="term" value="C:transcription factor TFIIK complex"/>
    <property type="evidence" value="ECO:0000318"/>
    <property type="project" value="GO_Central"/>
</dbReference>
<dbReference type="GO" id="GO:0005524">
    <property type="term" value="F:ATP binding"/>
    <property type="evidence" value="ECO:0007669"/>
    <property type="project" value="UniProtKB-KW"/>
</dbReference>
<dbReference type="GO" id="GO:0004693">
    <property type="term" value="F:cyclin-dependent protein serine/threonine kinase activity"/>
    <property type="evidence" value="ECO:0000318"/>
    <property type="project" value="GO_Central"/>
</dbReference>
<dbReference type="GO" id="GO:0106310">
    <property type="term" value="F:protein serine kinase activity"/>
    <property type="evidence" value="ECO:0007669"/>
    <property type="project" value="RHEA"/>
</dbReference>
<dbReference type="GO" id="GO:0008353">
    <property type="term" value="F:RNA polymerase II CTD heptapeptide repeat kinase activity"/>
    <property type="evidence" value="ECO:0000250"/>
    <property type="project" value="WormBase"/>
</dbReference>
<dbReference type="GO" id="GO:0051301">
    <property type="term" value="P:cell division"/>
    <property type="evidence" value="ECO:0007669"/>
    <property type="project" value="UniProtKB-KW"/>
</dbReference>
<dbReference type="GO" id="GO:0045448">
    <property type="term" value="P:mitotic cell cycle, embryonic"/>
    <property type="evidence" value="ECO:0000315"/>
    <property type="project" value="WormBase"/>
</dbReference>
<dbReference type="GO" id="GO:0009299">
    <property type="term" value="P:mRNA transcription"/>
    <property type="evidence" value="ECO:0000314"/>
    <property type="project" value="WormBase"/>
</dbReference>
<dbReference type="GO" id="GO:0045944">
    <property type="term" value="P:positive regulation of transcription by RNA polymerase II"/>
    <property type="evidence" value="ECO:0000318"/>
    <property type="project" value="GO_Central"/>
</dbReference>
<dbReference type="GO" id="GO:0051726">
    <property type="term" value="P:regulation of cell cycle"/>
    <property type="evidence" value="ECO:0000318"/>
    <property type="project" value="GO_Central"/>
</dbReference>
<dbReference type="CDD" id="cd07841">
    <property type="entry name" value="STKc_CDK7"/>
    <property type="match status" value="1"/>
</dbReference>
<dbReference type="FunFam" id="3.30.200.20:FF:000289">
    <property type="entry name" value="Cyclin-dependent kinase D-1"/>
    <property type="match status" value="1"/>
</dbReference>
<dbReference type="FunFam" id="1.10.510.10:FF:000097">
    <property type="entry name" value="Putative cyclin-dependent kinase 7"/>
    <property type="match status" value="1"/>
</dbReference>
<dbReference type="Gene3D" id="3.30.200.20">
    <property type="entry name" value="Phosphorylase Kinase, domain 1"/>
    <property type="match status" value="1"/>
</dbReference>
<dbReference type="Gene3D" id="1.10.510.10">
    <property type="entry name" value="Transferase(Phosphotransferase) domain 1"/>
    <property type="match status" value="1"/>
</dbReference>
<dbReference type="InterPro" id="IPR050108">
    <property type="entry name" value="CDK"/>
</dbReference>
<dbReference type="InterPro" id="IPR037770">
    <property type="entry name" value="CDK7"/>
</dbReference>
<dbReference type="InterPro" id="IPR011009">
    <property type="entry name" value="Kinase-like_dom_sf"/>
</dbReference>
<dbReference type="InterPro" id="IPR000719">
    <property type="entry name" value="Prot_kinase_dom"/>
</dbReference>
<dbReference type="InterPro" id="IPR017441">
    <property type="entry name" value="Protein_kinase_ATP_BS"/>
</dbReference>
<dbReference type="InterPro" id="IPR008271">
    <property type="entry name" value="Ser/Thr_kinase_AS"/>
</dbReference>
<dbReference type="PANTHER" id="PTHR24056">
    <property type="entry name" value="CELL DIVISION PROTEIN KINASE"/>
    <property type="match status" value="1"/>
</dbReference>
<dbReference type="PANTHER" id="PTHR24056:SF0">
    <property type="entry name" value="CYCLIN-DEPENDENT KINASE 7"/>
    <property type="match status" value="1"/>
</dbReference>
<dbReference type="Pfam" id="PF00069">
    <property type="entry name" value="Pkinase"/>
    <property type="match status" value="1"/>
</dbReference>
<dbReference type="SMART" id="SM00220">
    <property type="entry name" value="S_TKc"/>
    <property type="match status" value="1"/>
</dbReference>
<dbReference type="SUPFAM" id="SSF56112">
    <property type="entry name" value="Protein kinase-like (PK-like)"/>
    <property type="match status" value="1"/>
</dbReference>
<dbReference type="PROSITE" id="PS00107">
    <property type="entry name" value="PROTEIN_KINASE_ATP"/>
    <property type="match status" value="1"/>
</dbReference>
<dbReference type="PROSITE" id="PS50011">
    <property type="entry name" value="PROTEIN_KINASE_DOM"/>
    <property type="match status" value="1"/>
</dbReference>
<dbReference type="PROSITE" id="PS00108">
    <property type="entry name" value="PROTEIN_KINASE_ST"/>
    <property type="match status" value="1"/>
</dbReference>
<protein>
    <recommendedName>
        <fullName evidence="5">Cyclin-dependent kinase 7</fullName>
        <ecNumber evidence="1">2.7.11.22</ecNumber>
        <ecNumber evidence="4">2.7.11.23</ecNumber>
    </recommendedName>
    <alternativeName>
        <fullName evidence="5">Cell division protein kinase 7</fullName>
    </alternativeName>
</protein>
<evidence type="ECO:0000250" key="1">
    <source>
        <dbReference type="UniProtKB" id="P50613"/>
    </source>
</evidence>
<evidence type="ECO:0000255" key="2">
    <source>
        <dbReference type="PROSITE-ProRule" id="PRU00159"/>
    </source>
</evidence>
<evidence type="ECO:0000256" key="3">
    <source>
        <dbReference type="SAM" id="MobiDB-lite"/>
    </source>
</evidence>
<evidence type="ECO:0000269" key="4">
    <source>
    </source>
</evidence>
<evidence type="ECO:0000305" key="5"/>
<evidence type="ECO:0000312" key="6">
    <source>
        <dbReference type="EMBL" id="AAD38186.1"/>
    </source>
</evidence>
<evidence type="ECO:0000312" key="7">
    <source>
        <dbReference type="Proteomes" id="UP000001940"/>
    </source>
</evidence>
<evidence type="ECO:0000312" key="8">
    <source>
        <dbReference type="WormBase" id="Y39G10AL.3"/>
    </source>
</evidence>